<organism>
    <name type="scientific">Caenorhabditis elegans</name>
    <dbReference type="NCBI Taxonomy" id="6239"/>
    <lineage>
        <taxon>Eukaryota</taxon>
        <taxon>Metazoa</taxon>
        <taxon>Ecdysozoa</taxon>
        <taxon>Nematoda</taxon>
        <taxon>Chromadorea</taxon>
        <taxon>Rhabditida</taxon>
        <taxon>Rhabditina</taxon>
        <taxon>Rhabditomorpha</taxon>
        <taxon>Rhabditoidea</taxon>
        <taxon>Rhabditidae</taxon>
        <taxon>Peloderinae</taxon>
        <taxon>Caenorhabditis</taxon>
    </lineage>
</organism>
<name>NICA_CAEEL</name>
<comment type="function">
    <text evidence="2 3">Essential subunit of the gamma-secretase complex, an endoprotease complex that catalyzes the intramembrane cleavage of integral membrane proteins such as Notch (glp-1 or lin-12). It may represents a stabilizing cofactor required for the assembly of the gamma-secretase complex.</text>
</comment>
<comment type="subunit">
    <text evidence="5">Component of the gamma-secretase complex, a complex probably composed of the presenilin homodimer (sel-12, hop-1 or spe-4), nicastrin (aph-2), aph-1 and pen-2.</text>
</comment>
<comment type="subcellular location">
    <subcellularLocation>
        <location evidence="5">Membrane</location>
        <topology evidence="5">Single-pass type I membrane protein</topology>
    </subcellularLocation>
</comment>
<comment type="similarity">
    <text evidence="5">Belongs to the nicastrin family.</text>
</comment>
<gene>
    <name type="primary">aph-2</name>
    <name type="ORF">ZC434.6</name>
</gene>
<protein>
    <recommendedName>
        <fullName>Nicastrin</fullName>
    </recommendedName>
    <alternativeName>
        <fullName>Anterior-pharynx-defective protein 2</fullName>
    </alternativeName>
</protein>
<sequence length="723" mass="81659">MKKWLVIVLIIAGIRCDGFSDQVFRTLFIGEGNACYRTFNKTHEFGCQANRENENGLIVRIDKQEDFKNLDSCWNSFYPKYSGKYWALLPVNLIRRDTISQLKSSKCLSGIVLYNSGESIHPGDESTAASHDAECPNAASDYYLQDKNEEYCERKINSRGAITRDGLMKIDWRIQMVFIDNSTDLEIIEKCYSMFNKPKEDGSSGYPYCGMSFRLANMAAGNSEICYRRGKNDAKLFQMNIDSGDAPQLCGAMHSDNIFAFPTPIPTSPTNETIITSKYMMVTARMDSFGMIPEISVGEVSVLTSIISVLAAARSMGTQIEKWQKASNTSNRNVFFAFFNGESLDYIGSGAAAYQMENGKFPQMIRSDRTHIHPIRPNELDYILEVQQIGVAKGRKYYVHVDGERYQQNKTQTDRVIDRIERGLRSHAFDLEKPSGSGDRVPPASWHSFAKADAHVQSVLLAPYGKEYEYQRVNSILDKNEWTEDEREKAIQEIEAVSTAILAAAADYVGVETDEVVAKVDKKLITTIFDCLITSNFWFDCDFMQKLDGGRYHKLFNSYGFNQKSTYISMESHTAFPTVLHWLTIFALGSDKETLNVKSEKSCSHLGQFQAFQMYTYTWQPNPYTGNFSCLKSAIVKKVMVSPAVDSQTPEEEMNTRYSTWMESVYIIESVNLYLMEDASFEYTMILIAVISALLSIFAVGRCSETTFIVDEGEPAAEGGEPL</sequence>
<evidence type="ECO:0000255" key="1"/>
<evidence type="ECO:0000269" key="2">
    <source>
    </source>
</evidence>
<evidence type="ECO:0000269" key="3">
    <source>
    </source>
</evidence>
<evidence type="ECO:0000269" key="4">
    <source>
    </source>
</evidence>
<evidence type="ECO:0000305" key="5"/>
<dbReference type="EMBL" id="Z75714">
    <property type="protein sequence ID" value="CAB00063.2"/>
    <property type="molecule type" value="Genomic_DNA"/>
</dbReference>
<dbReference type="PIR" id="T27570">
    <property type="entry name" value="T27570"/>
</dbReference>
<dbReference type="RefSeq" id="NP_492712.2">
    <property type="nucleotide sequence ID" value="NM_060311.4"/>
</dbReference>
<dbReference type="SMR" id="Q23316"/>
<dbReference type="BioGRID" id="38322">
    <property type="interactions" value="2"/>
</dbReference>
<dbReference type="FunCoup" id="Q23316">
    <property type="interactions" value="2674"/>
</dbReference>
<dbReference type="STRING" id="6239.ZC434.6b.1"/>
<dbReference type="GlyCosmos" id="Q23316">
    <property type="glycosylation" value="6 sites, No reported glycans"/>
</dbReference>
<dbReference type="iPTMnet" id="Q23316"/>
<dbReference type="PaxDb" id="6239-ZC434.6b"/>
<dbReference type="EnsemblMetazoa" id="ZC434.6b.1">
    <property type="protein sequence ID" value="ZC434.6b.1"/>
    <property type="gene ID" value="WBGene00000148"/>
</dbReference>
<dbReference type="GeneID" id="172905"/>
<dbReference type="KEGG" id="cel:CELE_ZC434.6"/>
<dbReference type="UCSC" id="ZC434.6b">
    <property type="organism name" value="c. elegans"/>
</dbReference>
<dbReference type="AGR" id="WB:WBGene00000148"/>
<dbReference type="CTD" id="172905"/>
<dbReference type="WormBase" id="ZC434.6b">
    <property type="protein sequence ID" value="CE34446"/>
    <property type="gene ID" value="WBGene00000148"/>
    <property type="gene designation" value="aph-2"/>
</dbReference>
<dbReference type="eggNOG" id="KOG2657">
    <property type="taxonomic scope" value="Eukaryota"/>
</dbReference>
<dbReference type="GeneTree" id="ENSGT00390000014633"/>
<dbReference type="InParanoid" id="Q23316"/>
<dbReference type="OMA" id="GEGNACY"/>
<dbReference type="OrthoDB" id="755951at2759"/>
<dbReference type="PhylomeDB" id="Q23316"/>
<dbReference type="Reactome" id="R-CEL-1251985">
    <property type="pathway name" value="Nuclear signaling by ERBB4"/>
</dbReference>
<dbReference type="Reactome" id="R-CEL-3928665">
    <property type="pathway name" value="EPH-ephrin mediated repulsion of cells"/>
</dbReference>
<dbReference type="Reactome" id="R-CEL-6798695">
    <property type="pathway name" value="Neutrophil degranulation"/>
</dbReference>
<dbReference type="SignaLink" id="Q23316"/>
<dbReference type="PRO" id="PR:Q23316"/>
<dbReference type="Proteomes" id="UP000001940">
    <property type="component" value="Chromosome I"/>
</dbReference>
<dbReference type="Bgee" id="WBGene00000148">
    <property type="expression patterns" value="Expressed in embryo and 4 other cell types or tissues"/>
</dbReference>
<dbReference type="ExpressionAtlas" id="Q23316">
    <property type="expression patterns" value="baseline and differential"/>
</dbReference>
<dbReference type="GO" id="GO:0070765">
    <property type="term" value="C:gamma-secretase complex"/>
    <property type="evidence" value="ECO:0000250"/>
    <property type="project" value="WormBase"/>
</dbReference>
<dbReference type="GO" id="GO:0005886">
    <property type="term" value="C:plasma membrane"/>
    <property type="evidence" value="ECO:0000314"/>
    <property type="project" value="WormBase"/>
</dbReference>
<dbReference type="GO" id="GO:0060581">
    <property type="term" value="P:cell fate commitment involved in pattern specification"/>
    <property type="evidence" value="ECO:0000315"/>
    <property type="project" value="WormBase"/>
</dbReference>
<dbReference type="GO" id="GO:0018991">
    <property type="term" value="P:egg-laying behavior"/>
    <property type="evidence" value="ECO:0000315"/>
    <property type="project" value="WormBase"/>
</dbReference>
<dbReference type="GO" id="GO:0048598">
    <property type="term" value="P:embryonic morphogenesis"/>
    <property type="evidence" value="ECO:0000315"/>
    <property type="project" value="WormBase"/>
</dbReference>
<dbReference type="GO" id="GO:0160094">
    <property type="term" value="P:nematode pharynx development"/>
    <property type="evidence" value="ECO:0000315"/>
    <property type="project" value="WormBase"/>
</dbReference>
<dbReference type="GO" id="GO:0007220">
    <property type="term" value="P:Notch receptor processing"/>
    <property type="evidence" value="ECO:0000318"/>
    <property type="project" value="GO_Central"/>
</dbReference>
<dbReference type="GO" id="GO:0007219">
    <property type="term" value="P:Notch signaling pathway"/>
    <property type="evidence" value="ECO:0000315"/>
    <property type="project" value="WormBase"/>
</dbReference>
<dbReference type="GO" id="GO:0016485">
    <property type="term" value="P:protein processing"/>
    <property type="evidence" value="ECO:0000318"/>
    <property type="project" value="GO_Central"/>
</dbReference>
<dbReference type="CDD" id="cd03881">
    <property type="entry name" value="M28_Nicastrin"/>
    <property type="match status" value="1"/>
</dbReference>
<dbReference type="Gene3D" id="3.40.630.10">
    <property type="entry name" value="Zn peptidases"/>
    <property type="match status" value="1"/>
</dbReference>
<dbReference type="InterPro" id="IPR041084">
    <property type="entry name" value="Ncstrn_small"/>
</dbReference>
<dbReference type="InterPro" id="IPR008710">
    <property type="entry name" value="Nicastrin"/>
</dbReference>
<dbReference type="PANTHER" id="PTHR21092">
    <property type="entry name" value="NICASTRIN"/>
    <property type="match status" value="1"/>
</dbReference>
<dbReference type="PANTHER" id="PTHR21092:SF0">
    <property type="entry name" value="NICASTRIN"/>
    <property type="match status" value="1"/>
</dbReference>
<dbReference type="Pfam" id="PF18266">
    <property type="entry name" value="Ncstrn_small"/>
    <property type="match status" value="1"/>
</dbReference>
<dbReference type="Pfam" id="PF05450">
    <property type="entry name" value="Nicastrin"/>
    <property type="match status" value="1"/>
</dbReference>
<dbReference type="SUPFAM" id="SSF53187">
    <property type="entry name" value="Zn-dependent exopeptidases"/>
    <property type="match status" value="1"/>
</dbReference>
<proteinExistence type="evidence at protein level"/>
<reference key="1">
    <citation type="journal article" date="1998" name="Science">
        <title>Genome sequence of the nematode C. elegans: a platform for investigating biology.</title>
        <authorList>
            <consortium name="The C. elegans sequencing consortium"/>
        </authorList>
    </citation>
    <scope>NUCLEOTIDE SEQUENCE [LARGE SCALE GENOMIC DNA]</scope>
    <source>
        <strain>Bristol N2</strain>
    </source>
</reference>
<reference key="2">
    <citation type="journal article" date="2000" name="Nature">
        <title>Nicastrin modulates presenilin-mediated notch/glp-1 signal transduction and betaAPP processing.</title>
        <authorList>
            <person name="Yu G."/>
            <person name="Nishimura M."/>
            <person name="Arawaka S."/>
            <person name="Levitan D."/>
            <person name="Zhang L."/>
            <person name="Tandon A."/>
            <person name="Song Y.-Q."/>
            <person name="Rogaeva E."/>
            <person name="Chen F."/>
            <person name="Kawarai T."/>
            <person name="Supala A."/>
            <person name="Levesque L."/>
            <person name="Yu H."/>
            <person name="Yang D.-S."/>
            <person name="Holmes E."/>
            <person name="Milman P."/>
            <person name="Liang Y."/>
            <person name="Zhang D.M."/>
            <person name="Xu D.H."/>
            <person name="Sato C."/>
            <person name="Rogaev E."/>
            <person name="Smith M."/>
            <person name="Janus C."/>
            <person name="Zhang Y."/>
            <person name="Aebersold R."/>
            <person name="Farrer L.S."/>
            <person name="Sorbi S."/>
            <person name="Bruni A."/>
            <person name="Fraser P.E."/>
            <person name="St George-Hyslop P.H."/>
        </authorList>
    </citation>
    <scope>FUNCTION</scope>
    <scope>GENE NAME</scope>
</reference>
<reference key="3">
    <citation type="journal article" date="2000" name="Development">
        <title>aph-2 encodes a novel extracellular protein required for GLP-1-mediated signaling.</title>
        <authorList>
            <person name="Goutte C."/>
            <person name="Hepler W."/>
            <person name="Mickey K.M."/>
            <person name="Priess J.R."/>
        </authorList>
    </citation>
    <scope>FUNCTION</scope>
</reference>
<reference key="4">
    <citation type="journal article" date="2007" name="Mol. Cell. Proteomics">
        <title>Proteomics reveals N-linked glycoprotein diversity in Caenorhabditis elegans and suggests an atypical translocation mechanism for integral membrane proteins.</title>
        <authorList>
            <person name="Kaji H."/>
            <person name="Kamiie J."/>
            <person name="Kawakami H."/>
            <person name="Kido K."/>
            <person name="Yamauchi Y."/>
            <person name="Shinkawa T."/>
            <person name="Taoka M."/>
            <person name="Takahashi N."/>
            <person name="Isobe T."/>
        </authorList>
    </citation>
    <scope>GLYCOSYLATION [LARGE SCALE ANALYSIS] AT ASN-181</scope>
    <scope>IDENTIFICATION BY MASS SPECTROMETRY</scope>
    <source>
        <strain>Bristol N2</strain>
    </source>
</reference>
<feature type="signal peptide" evidence="1">
    <location>
        <begin position="1"/>
        <end position="16"/>
    </location>
</feature>
<feature type="chain" id="PRO_0000019684" description="Nicastrin">
    <location>
        <begin position="17"/>
        <end position="723"/>
    </location>
</feature>
<feature type="topological domain" description="Extracellular" evidence="1">
    <location>
        <begin position="17"/>
        <end position="678"/>
    </location>
</feature>
<feature type="transmembrane region" description="Helical" evidence="1">
    <location>
        <begin position="679"/>
        <end position="699"/>
    </location>
</feature>
<feature type="topological domain" description="Cytoplasmic" evidence="1">
    <location>
        <begin position="700"/>
        <end position="723"/>
    </location>
</feature>
<feature type="glycosylation site" description="N-linked (GlcNAc...) asparagine" evidence="1">
    <location>
        <position position="40"/>
    </location>
</feature>
<feature type="glycosylation site" description="N-linked (GlcNAc...) asparagine" evidence="4">
    <location>
        <position position="181"/>
    </location>
</feature>
<feature type="glycosylation site" description="N-linked (GlcNAc...) asparagine" evidence="1">
    <location>
        <position position="271"/>
    </location>
</feature>
<feature type="glycosylation site" description="N-linked (GlcNAc...) asparagine" evidence="1">
    <location>
        <position position="328"/>
    </location>
</feature>
<feature type="glycosylation site" description="N-linked (GlcNAc...) asparagine" evidence="1">
    <location>
        <position position="409"/>
    </location>
</feature>
<feature type="glycosylation site" description="N-linked (GlcNAc...) asparagine" evidence="1">
    <location>
        <position position="627"/>
    </location>
</feature>
<keyword id="KW-0325">Glycoprotein</keyword>
<keyword id="KW-0472">Membrane</keyword>
<keyword id="KW-0914">Notch signaling pathway</keyword>
<keyword id="KW-1185">Reference proteome</keyword>
<keyword id="KW-0732">Signal</keyword>
<keyword id="KW-0812">Transmembrane</keyword>
<keyword id="KW-1133">Transmembrane helix</keyword>
<accession>Q23316</accession>